<gene>
    <name evidence="1" type="primary">hisI</name>
    <name type="ordered locus">Ctha_1880</name>
</gene>
<evidence type="ECO:0000255" key="1">
    <source>
        <dbReference type="HAMAP-Rule" id="MF_01021"/>
    </source>
</evidence>
<protein>
    <recommendedName>
        <fullName evidence="1">Phosphoribosyl-AMP cyclohydrolase</fullName>
        <shortName evidence="1">PRA-CH</shortName>
        <ecNumber evidence="1">3.5.4.19</ecNumber>
    </recommendedName>
</protein>
<dbReference type="EC" id="3.5.4.19" evidence="1"/>
<dbReference type="EMBL" id="CP001100">
    <property type="protein sequence ID" value="ACF14337.1"/>
    <property type="molecule type" value="Genomic_DNA"/>
</dbReference>
<dbReference type="RefSeq" id="WP_012500421.1">
    <property type="nucleotide sequence ID" value="NC_011026.1"/>
</dbReference>
<dbReference type="SMR" id="B3QU88"/>
<dbReference type="STRING" id="517418.Ctha_1880"/>
<dbReference type="KEGG" id="cts:Ctha_1880"/>
<dbReference type="eggNOG" id="COG0139">
    <property type="taxonomic scope" value="Bacteria"/>
</dbReference>
<dbReference type="HOGENOM" id="CLU_048577_5_0_10"/>
<dbReference type="OrthoDB" id="9795769at2"/>
<dbReference type="UniPathway" id="UPA00031">
    <property type="reaction ID" value="UER00008"/>
</dbReference>
<dbReference type="Proteomes" id="UP000001208">
    <property type="component" value="Chromosome"/>
</dbReference>
<dbReference type="GO" id="GO:0005737">
    <property type="term" value="C:cytoplasm"/>
    <property type="evidence" value="ECO:0007669"/>
    <property type="project" value="UniProtKB-SubCell"/>
</dbReference>
<dbReference type="GO" id="GO:0000287">
    <property type="term" value="F:magnesium ion binding"/>
    <property type="evidence" value="ECO:0007669"/>
    <property type="project" value="UniProtKB-UniRule"/>
</dbReference>
<dbReference type="GO" id="GO:0004635">
    <property type="term" value="F:phosphoribosyl-AMP cyclohydrolase activity"/>
    <property type="evidence" value="ECO:0007669"/>
    <property type="project" value="UniProtKB-UniRule"/>
</dbReference>
<dbReference type="GO" id="GO:0008270">
    <property type="term" value="F:zinc ion binding"/>
    <property type="evidence" value="ECO:0007669"/>
    <property type="project" value="UniProtKB-UniRule"/>
</dbReference>
<dbReference type="GO" id="GO:0000105">
    <property type="term" value="P:L-histidine biosynthetic process"/>
    <property type="evidence" value="ECO:0007669"/>
    <property type="project" value="UniProtKB-UniRule"/>
</dbReference>
<dbReference type="FunFam" id="3.10.20.810:FF:000001">
    <property type="entry name" value="Histidine biosynthesis bifunctional protein HisIE"/>
    <property type="match status" value="1"/>
</dbReference>
<dbReference type="Gene3D" id="3.10.20.810">
    <property type="entry name" value="Phosphoribosyl-AMP cyclohydrolase"/>
    <property type="match status" value="1"/>
</dbReference>
<dbReference type="HAMAP" id="MF_01021">
    <property type="entry name" value="HisI"/>
    <property type="match status" value="1"/>
</dbReference>
<dbReference type="InterPro" id="IPR026660">
    <property type="entry name" value="PRA-CH"/>
</dbReference>
<dbReference type="InterPro" id="IPR002496">
    <property type="entry name" value="PRib_AMP_CycHydrolase_dom"/>
</dbReference>
<dbReference type="InterPro" id="IPR038019">
    <property type="entry name" value="PRib_AMP_CycHydrolase_sf"/>
</dbReference>
<dbReference type="NCBIfam" id="NF000768">
    <property type="entry name" value="PRK00051.1"/>
    <property type="match status" value="1"/>
</dbReference>
<dbReference type="PANTHER" id="PTHR42945">
    <property type="entry name" value="HISTIDINE BIOSYNTHESIS BIFUNCTIONAL PROTEIN"/>
    <property type="match status" value="1"/>
</dbReference>
<dbReference type="PANTHER" id="PTHR42945:SF1">
    <property type="entry name" value="HISTIDINE BIOSYNTHESIS BIFUNCTIONAL PROTEIN HIS7"/>
    <property type="match status" value="1"/>
</dbReference>
<dbReference type="Pfam" id="PF01502">
    <property type="entry name" value="PRA-CH"/>
    <property type="match status" value="1"/>
</dbReference>
<dbReference type="SUPFAM" id="SSF141734">
    <property type="entry name" value="HisI-like"/>
    <property type="match status" value="1"/>
</dbReference>
<reference key="1">
    <citation type="submission" date="2008-06" db="EMBL/GenBank/DDBJ databases">
        <title>Complete sequence of Chloroherpeton thalassium ATCC 35110.</title>
        <authorList>
            <consortium name="US DOE Joint Genome Institute"/>
            <person name="Lucas S."/>
            <person name="Copeland A."/>
            <person name="Lapidus A."/>
            <person name="Glavina del Rio T."/>
            <person name="Dalin E."/>
            <person name="Tice H."/>
            <person name="Bruce D."/>
            <person name="Goodwin L."/>
            <person name="Pitluck S."/>
            <person name="Schmutz J."/>
            <person name="Larimer F."/>
            <person name="Land M."/>
            <person name="Hauser L."/>
            <person name="Kyrpides N."/>
            <person name="Mikhailova N."/>
            <person name="Liu Z."/>
            <person name="Li T."/>
            <person name="Zhao F."/>
            <person name="Overmann J."/>
            <person name="Bryant D.A."/>
            <person name="Richardson P."/>
        </authorList>
    </citation>
    <scope>NUCLEOTIDE SEQUENCE [LARGE SCALE GENOMIC DNA]</scope>
    <source>
        <strain>ATCC 35110 / GB-78</strain>
    </source>
</reference>
<proteinExistence type="inferred from homology"/>
<name>HIS3_CHLT3</name>
<sequence length="140" mass="15954">MKESEGIDVKLMDIVRFDKNGLIPAITQDYETGKVLMLAYMNKESLEVTLKERKACYWSRSRQELWLKGATSGNFQEVMQISIDCDADAILLKVKQKGGACHVGYYSCFYRQVENDNSSLSICDKLVFDAEEVYGKSNKK</sequence>
<accession>B3QU88</accession>
<feature type="chain" id="PRO_1000135344" description="Phosphoribosyl-AMP cyclohydrolase">
    <location>
        <begin position="1"/>
        <end position="140"/>
    </location>
</feature>
<feature type="binding site" evidence="1">
    <location>
        <position position="84"/>
    </location>
    <ligand>
        <name>Mg(2+)</name>
        <dbReference type="ChEBI" id="CHEBI:18420"/>
    </ligand>
</feature>
<feature type="binding site" evidence="1">
    <location>
        <position position="85"/>
    </location>
    <ligand>
        <name>Zn(2+)</name>
        <dbReference type="ChEBI" id="CHEBI:29105"/>
        <note>ligand shared between dimeric partners</note>
    </ligand>
</feature>
<feature type="binding site" evidence="1">
    <location>
        <position position="86"/>
    </location>
    <ligand>
        <name>Mg(2+)</name>
        <dbReference type="ChEBI" id="CHEBI:18420"/>
    </ligand>
</feature>
<feature type="binding site" evidence="1">
    <location>
        <position position="88"/>
    </location>
    <ligand>
        <name>Mg(2+)</name>
        <dbReference type="ChEBI" id="CHEBI:18420"/>
    </ligand>
</feature>
<feature type="binding site" evidence="1">
    <location>
        <position position="101"/>
    </location>
    <ligand>
        <name>Zn(2+)</name>
        <dbReference type="ChEBI" id="CHEBI:29105"/>
        <note>ligand shared between dimeric partners</note>
    </ligand>
</feature>
<feature type="binding site" evidence="1">
    <location>
        <position position="108"/>
    </location>
    <ligand>
        <name>Zn(2+)</name>
        <dbReference type="ChEBI" id="CHEBI:29105"/>
        <note>ligand shared between dimeric partners</note>
    </ligand>
</feature>
<keyword id="KW-0028">Amino-acid biosynthesis</keyword>
<keyword id="KW-0963">Cytoplasm</keyword>
<keyword id="KW-0368">Histidine biosynthesis</keyword>
<keyword id="KW-0378">Hydrolase</keyword>
<keyword id="KW-0460">Magnesium</keyword>
<keyword id="KW-0479">Metal-binding</keyword>
<keyword id="KW-1185">Reference proteome</keyword>
<keyword id="KW-0862">Zinc</keyword>
<organism>
    <name type="scientific">Chloroherpeton thalassium (strain ATCC 35110 / GB-78)</name>
    <dbReference type="NCBI Taxonomy" id="517418"/>
    <lineage>
        <taxon>Bacteria</taxon>
        <taxon>Pseudomonadati</taxon>
        <taxon>Chlorobiota</taxon>
        <taxon>Chlorobiia</taxon>
        <taxon>Chlorobiales</taxon>
        <taxon>Chloroherpetonaceae</taxon>
        <taxon>Chloroherpeton</taxon>
    </lineage>
</organism>
<comment type="function">
    <text evidence="1">Catalyzes the hydrolysis of the adenine ring of phosphoribosyl-AMP.</text>
</comment>
<comment type="catalytic activity">
    <reaction evidence="1">
        <text>1-(5-phospho-beta-D-ribosyl)-5'-AMP + H2O = 1-(5-phospho-beta-D-ribosyl)-5-[(5-phospho-beta-D-ribosylamino)methylideneamino]imidazole-4-carboxamide</text>
        <dbReference type="Rhea" id="RHEA:20049"/>
        <dbReference type="ChEBI" id="CHEBI:15377"/>
        <dbReference type="ChEBI" id="CHEBI:58435"/>
        <dbReference type="ChEBI" id="CHEBI:59457"/>
        <dbReference type="EC" id="3.5.4.19"/>
    </reaction>
</comment>
<comment type="cofactor">
    <cofactor evidence="1">
        <name>Mg(2+)</name>
        <dbReference type="ChEBI" id="CHEBI:18420"/>
    </cofactor>
    <text evidence="1">Binds 1 Mg(2+) ion per subunit.</text>
</comment>
<comment type="cofactor">
    <cofactor evidence="1">
        <name>Zn(2+)</name>
        <dbReference type="ChEBI" id="CHEBI:29105"/>
    </cofactor>
    <text evidence="1">Binds 1 zinc ion per subunit.</text>
</comment>
<comment type="pathway">
    <text evidence="1">Amino-acid biosynthesis; L-histidine biosynthesis; L-histidine from 5-phospho-alpha-D-ribose 1-diphosphate: step 3/9.</text>
</comment>
<comment type="subunit">
    <text evidence="1">Homodimer.</text>
</comment>
<comment type="subcellular location">
    <subcellularLocation>
        <location evidence="1">Cytoplasm</location>
    </subcellularLocation>
</comment>
<comment type="similarity">
    <text evidence="1">Belongs to the PRA-CH family.</text>
</comment>